<name>E4PD_EDWI9</name>
<comment type="function">
    <text evidence="1">Catalyzes the NAD-dependent conversion of D-erythrose 4-phosphate to 4-phosphoerythronate.</text>
</comment>
<comment type="catalytic activity">
    <reaction evidence="1">
        <text>D-erythrose 4-phosphate + NAD(+) + H2O = 4-phospho-D-erythronate + NADH + 2 H(+)</text>
        <dbReference type="Rhea" id="RHEA:12056"/>
        <dbReference type="ChEBI" id="CHEBI:15377"/>
        <dbReference type="ChEBI" id="CHEBI:15378"/>
        <dbReference type="ChEBI" id="CHEBI:16897"/>
        <dbReference type="ChEBI" id="CHEBI:57540"/>
        <dbReference type="ChEBI" id="CHEBI:57945"/>
        <dbReference type="ChEBI" id="CHEBI:58766"/>
        <dbReference type="EC" id="1.2.1.72"/>
    </reaction>
</comment>
<comment type="pathway">
    <text evidence="1">Cofactor biosynthesis; pyridoxine 5'-phosphate biosynthesis; pyridoxine 5'-phosphate from D-erythrose 4-phosphate: step 1/5.</text>
</comment>
<comment type="subunit">
    <text evidence="1">Homotetramer.</text>
</comment>
<comment type="subcellular location">
    <subcellularLocation>
        <location evidence="1">Cytoplasm</location>
    </subcellularLocation>
</comment>
<comment type="similarity">
    <text evidence="1">Belongs to the glyceraldehyde-3-phosphate dehydrogenase family. Epd subfamily.</text>
</comment>
<organism>
    <name type="scientific">Edwardsiella ictaluri (strain 93-146)</name>
    <dbReference type="NCBI Taxonomy" id="634503"/>
    <lineage>
        <taxon>Bacteria</taxon>
        <taxon>Pseudomonadati</taxon>
        <taxon>Pseudomonadota</taxon>
        <taxon>Gammaproteobacteria</taxon>
        <taxon>Enterobacterales</taxon>
        <taxon>Hafniaceae</taxon>
        <taxon>Edwardsiella</taxon>
    </lineage>
</organism>
<dbReference type="EC" id="1.2.1.72" evidence="1"/>
<dbReference type="EMBL" id="CP001600">
    <property type="protein sequence ID" value="ACR70506.1"/>
    <property type="molecule type" value="Genomic_DNA"/>
</dbReference>
<dbReference type="RefSeq" id="WP_015872579.1">
    <property type="nucleotide sequence ID" value="NZ_CP169062.1"/>
</dbReference>
<dbReference type="SMR" id="C5BAU7"/>
<dbReference type="STRING" id="67780.B6E78_08530"/>
<dbReference type="GeneID" id="69540224"/>
<dbReference type="KEGG" id="eic:NT01EI_3369"/>
<dbReference type="PATRIC" id="fig|634503.3.peg.2995"/>
<dbReference type="HOGENOM" id="CLU_030140_0_0_6"/>
<dbReference type="OrthoDB" id="9803304at2"/>
<dbReference type="UniPathway" id="UPA00244">
    <property type="reaction ID" value="UER00309"/>
</dbReference>
<dbReference type="Proteomes" id="UP000001485">
    <property type="component" value="Chromosome"/>
</dbReference>
<dbReference type="GO" id="GO:0005737">
    <property type="term" value="C:cytoplasm"/>
    <property type="evidence" value="ECO:0007669"/>
    <property type="project" value="UniProtKB-SubCell"/>
</dbReference>
<dbReference type="GO" id="GO:0048001">
    <property type="term" value="F:erythrose-4-phosphate dehydrogenase activity"/>
    <property type="evidence" value="ECO:0007669"/>
    <property type="project" value="UniProtKB-UniRule"/>
</dbReference>
<dbReference type="GO" id="GO:0051287">
    <property type="term" value="F:NAD binding"/>
    <property type="evidence" value="ECO:0007669"/>
    <property type="project" value="InterPro"/>
</dbReference>
<dbReference type="GO" id="GO:0042823">
    <property type="term" value="P:pyridoxal phosphate biosynthetic process"/>
    <property type="evidence" value="ECO:0007669"/>
    <property type="project" value="UniProtKB-UniRule"/>
</dbReference>
<dbReference type="GO" id="GO:0008615">
    <property type="term" value="P:pyridoxine biosynthetic process"/>
    <property type="evidence" value="ECO:0007669"/>
    <property type="project" value="UniProtKB-UniRule"/>
</dbReference>
<dbReference type="CDD" id="cd23937">
    <property type="entry name" value="GAPDH_C_E4PDH"/>
    <property type="match status" value="1"/>
</dbReference>
<dbReference type="CDD" id="cd17892">
    <property type="entry name" value="GAPDH_N_E4PDH"/>
    <property type="match status" value="1"/>
</dbReference>
<dbReference type="FunFam" id="3.30.360.10:FF:000007">
    <property type="entry name" value="D-erythrose-4-phosphate dehydrogenase"/>
    <property type="match status" value="1"/>
</dbReference>
<dbReference type="FunFam" id="3.40.50.720:FF:000001">
    <property type="entry name" value="Glyceraldehyde-3-phosphate dehydrogenase"/>
    <property type="match status" value="1"/>
</dbReference>
<dbReference type="Gene3D" id="3.30.360.10">
    <property type="entry name" value="Dihydrodipicolinate Reductase, domain 2"/>
    <property type="match status" value="1"/>
</dbReference>
<dbReference type="Gene3D" id="3.40.50.720">
    <property type="entry name" value="NAD(P)-binding Rossmann-like Domain"/>
    <property type="match status" value="1"/>
</dbReference>
<dbReference type="HAMAP" id="MF_01640">
    <property type="entry name" value="E4P_dehydrog"/>
    <property type="match status" value="1"/>
</dbReference>
<dbReference type="InterPro" id="IPR006422">
    <property type="entry name" value="E4P_DH_bac"/>
</dbReference>
<dbReference type="InterPro" id="IPR020831">
    <property type="entry name" value="GlycerAld/Erythrose_P_DH"/>
</dbReference>
<dbReference type="InterPro" id="IPR020830">
    <property type="entry name" value="GlycerAld_3-P_DH_AS"/>
</dbReference>
<dbReference type="InterPro" id="IPR020829">
    <property type="entry name" value="GlycerAld_3-P_DH_cat"/>
</dbReference>
<dbReference type="InterPro" id="IPR020828">
    <property type="entry name" value="GlycerAld_3-P_DH_NAD(P)-bd"/>
</dbReference>
<dbReference type="InterPro" id="IPR036291">
    <property type="entry name" value="NAD(P)-bd_dom_sf"/>
</dbReference>
<dbReference type="NCBIfam" id="TIGR01532">
    <property type="entry name" value="E4PD_g-proteo"/>
    <property type="match status" value="1"/>
</dbReference>
<dbReference type="NCBIfam" id="NF010058">
    <property type="entry name" value="PRK13535.1"/>
    <property type="match status" value="1"/>
</dbReference>
<dbReference type="PANTHER" id="PTHR43148">
    <property type="entry name" value="GLYCERALDEHYDE-3-PHOSPHATE DEHYDROGENASE 2"/>
    <property type="match status" value="1"/>
</dbReference>
<dbReference type="Pfam" id="PF02800">
    <property type="entry name" value="Gp_dh_C"/>
    <property type="match status" value="1"/>
</dbReference>
<dbReference type="Pfam" id="PF00044">
    <property type="entry name" value="Gp_dh_N"/>
    <property type="match status" value="1"/>
</dbReference>
<dbReference type="PIRSF" id="PIRSF000149">
    <property type="entry name" value="GAP_DH"/>
    <property type="match status" value="1"/>
</dbReference>
<dbReference type="PRINTS" id="PR00078">
    <property type="entry name" value="G3PDHDRGNASE"/>
</dbReference>
<dbReference type="SMART" id="SM00846">
    <property type="entry name" value="Gp_dh_N"/>
    <property type="match status" value="1"/>
</dbReference>
<dbReference type="SUPFAM" id="SSF55347">
    <property type="entry name" value="Glyceraldehyde-3-phosphate dehydrogenase-like, C-terminal domain"/>
    <property type="match status" value="1"/>
</dbReference>
<dbReference type="SUPFAM" id="SSF51735">
    <property type="entry name" value="NAD(P)-binding Rossmann-fold domains"/>
    <property type="match status" value="1"/>
</dbReference>
<dbReference type="PROSITE" id="PS00071">
    <property type="entry name" value="GAPDH"/>
    <property type="match status" value="1"/>
</dbReference>
<feature type="chain" id="PRO_1000215824" description="D-erythrose-4-phosphate dehydrogenase">
    <location>
        <begin position="1"/>
        <end position="341"/>
    </location>
</feature>
<feature type="active site" description="Nucleophile" evidence="1">
    <location>
        <position position="155"/>
    </location>
</feature>
<feature type="binding site" evidence="1">
    <location>
        <begin position="12"/>
        <end position="13"/>
    </location>
    <ligand>
        <name>NAD(+)</name>
        <dbReference type="ChEBI" id="CHEBI:57540"/>
    </ligand>
</feature>
<feature type="binding site" evidence="1">
    <location>
        <begin position="154"/>
        <end position="156"/>
    </location>
    <ligand>
        <name>substrate</name>
    </ligand>
</feature>
<feature type="binding site" evidence="1">
    <location>
        <position position="200"/>
    </location>
    <ligand>
        <name>substrate</name>
    </ligand>
</feature>
<feature type="binding site" evidence="1">
    <location>
        <begin position="213"/>
        <end position="214"/>
    </location>
    <ligand>
        <name>substrate</name>
    </ligand>
</feature>
<feature type="binding site" evidence="1">
    <location>
        <position position="236"/>
    </location>
    <ligand>
        <name>substrate</name>
    </ligand>
</feature>
<feature type="binding site" evidence="1">
    <location>
        <position position="318"/>
    </location>
    <ligand>
        <name>NAD(+)</name>
        <dbReference type="ChEBI" id="CHEBI:57540"/>
    </ligand>
</feature>
<feature type="site" description="Activates thiol group during catalysis" evidence="1">
    <location>
        <position position="182"/>
    </location>
</feature>
<protein>
    <recommendedName>
        <fullName evidence="1">D-erythrose-4-phosphate dehydrogenase</fullName>
        <shortName evidence="1">E4PDH</shortName>
        <ecNumber evidence="1">1.2.1.72</ecNumber>
    </recommendedName>
</protein>
<reference key="1">
    <citation type="submission" date="2009-03" db="EMBL/GenBank/DDBJ databases">
        <title>Complete genome sequence of Edwardsiella ictaluri 93-146.</title>
        <authorList>
            <person name="Williams M.L."/>
            <person name="Gillaspy A.F."/>
            <person name="Dyer D.W."/>
            <person name="Thune R.L."/>
            <person name="Waldbieser G.C."/>
            <person name="Schuster S.C."/>
            <person name="Gipson J."/>
            <person name="Zaitshik J."/>
            <person name="Landry C."/>
            <person name="Lawrence M.L."/>
        </authorList>
    </citation>
    <scope>NUCLEOTIDE SEQUENCE [LARGE SCALE GENOMIC DNA]</scope>
    <source>
        <strain>93-146</strain>
    </source>
</reference>
<gene>
    <name evidence="1" type="primary">epd</name>
    <name type="ordered locus">NT01EI_3369</name>
</gene>
<proteinExistence type="inferred from homology"/>
<accession>C5BAU7</accession>
<evidence type="ECO:0000255" key="1">
    <source>
        <dbReference type="HAMAP-Rule" id="MF_01640"/>
    </source>
</evidence>
<sequence length="341" mass="37550">MTIRIAINGFGRIGRNVLRALYESGRQTQMRVVAINELAAAEGMAHLLQYDTCHGRFAWSVRQQDDWLWIGDDRIRLLHRPQIADLPWEALQVDVVLECSGVYGSRADGEAHLLAGAGKVLFSHPGGHDLDATVVYGVNQESLLAEHRIVSNASCTTNCIIPVIKLLDDAFAIESGAVTTIHSSMNDQQVIDAYHPDLRRTRAASHSIIPVDTKLAAGIARVLPQFRDRFEAISVRVPTLNVTAIDLSVSVRTPVRVEQVNHLLQKAASTAFHGIVDYTELPLVSTDFNHDPHSAIVDGTQTRVSGRHLIKTLVWCDNEWGFANRMLDTTLAMARAVSNAS</sequence>
<keyword id="KW-0963">Cytoplasm</keyword>
<keyword id="KW-0520">NAD</keyword>
<keyword id="KW-0560">Oxidoreductase</keyword>
<keyword id="KW-0664">Pyridoxine biosynthesis</keyword>